<comment type="function">
    <text evidence="1">NDH-1 shuttles electrons from NADH, via FMN and iron-sulfur (Fe-S) centers, to quinones in the respiratory chain. The immediate electron acceptor for the enzyme in this species is believed to be ubiquinone. Couples the redox reaction to proton translocation (for every two electrons transferred, four hydrogen ions are translocated across the cytoplasmic membrane), and thus conserves the redox energy in a proton gradient.</text>
</comment>
<comment type="catalytic activity">
    <reaction evidence="1">
        <text>a quinone + NADH + 5 H(+)(in) = a quinol + NAD(+) + 4 H(+)(out)</text>
        <dbReference type="Rhea" id="RHEA:57888"/>
        <dbReference type="ChEBI" id="CHEBI:15378"/>
        <dbReference type="ChEBI" id="CHEBI:24646"/>
        <dbReference type="ChEBI" id="CHEBI:57540"/>
        <dbReference type="ChEBI" id="CHEBI:57945"/>
        <dbReference type="ChEBI" id="CHEBI:132124"/>
    </reaction>
</comment>
<comment type="subunit">
    <text evidence="1">NDH-1 is composed of 14 different subunits. Subunits NuoA, H, J, K, L, M, N constitute the membrane sector of the complex.</text>
</comment>
<comment type="subcellular location">
    <subcellularLocation>
        <location evidence="1">Cell inner membrane</location>
        <topology evidence="1">Multi-pass membrane protein</topology>
    </subcellularLocation>
</comment>
<comment type="similarity">
    <text evidence="1">Belongs to the complex I subunit 2 family.</text>
</comment>
<organism>
    <name type="scientific">Erythrobacter litoralis (strain HTCC2594)</name>
    <dbReference type="NCBI Taxonomy" id="314225"/>
    <lineage>
        <taxon>Bacteria</taxon>
        <taxon>Pseudomonadati</taxon>
        <taxon>Pseudomonadota</taxon>
        <taxon>Alphaproteobacteria</taxon>
        <taxon>Sphingomonadales</taxon>
        <taxon>Erythrobacteraceae</taxon>
        <taxon>Erythrobacter/Porphyrobacter group</taxon>
        <taxon>Erythrobacter</taxon>
    </lineage>
</organism>
<protein>
    <recommendedName>
        <fullName evidence="1">NADH-quinone oxidoreductase subunit N</fullName>
        <ecNumber evidence="1">7.1.1.-</ecNumber>
    </recommendedName>
    <alternativeName>
        <fullName evidence="1">NADH dehydrogenase I subunit N</fullName>
    </alternativeName>
    <alternativeName>
        <fullName evidence="1">NDH-1 subunit N</fullName>
    </alternativeName>
</protein>
<proteinExistence type="inferred from homology"/>
<feature type="chain" id="PRO_0000391144" description="NADH-quinone oxidoreductase subunit N">
    <location>
        <begin position="1"/>
        <end position="487"/>
    </location>
</feature>
<feature type="transmembrane region" description="Helical" evidence="1">
    <location>
        <begin position="7"/>
        <end position="27"/>
    </location>
</feature>
<feature type="transmembrane region" description="Helical" evidence="1">
    <location>
        <begin position="37"/>
        <end position="57"/>
    </location>
</feature>
<feature type="transmembrane region" description="Helical" evidence="1">
    <location>
        <begin position="81"/>
        <end position="101"/>
    </location>
</feature>
<feature type="transmembrane region" description="Helical" evidence="1">
    <location>
        <begin position="112"/>
        <end position="132"/>
    </location>
</feature>
<feature type="transmembrane region" description="Helical" evidence="1">
    <location>
        <begin position="166"/>
        <end position="186"/>
    </location>
</feature>
<feature type="transmembrane region" description="Helical" evidence="1">
    <location>
        <begin position="207"/>
        <end position="227"/>
    </location>
</feature>
<feature type="transmembrane region" description="Helical" evidence="1">
    <location>
        <begin position="237"/>
        <end position="257"/>
    </location>
</feature>
<feature type="transmembrane region" description="Helical" evidence="1">
    <location>
        <begin position="276"/>
        <end position="296"/>
    </location>
</feature>
<feature type="transmembrane region" description="Helical" evidence="1">
    <location>
        <begin position="307"/>
        <end position="327"/>
    </location>
</feature>
<feature type="transmembrane region" description="Helical" evidence="1">
    <location>
        <begin position="329"/>
        <end position="349"/>
    </location>
</feature>
<feature type="transmembrane region" description="Helical" evidence="1">
    <location>
        <begin position="373"/>
        <end position="393"/>
    </location>
</feature>
<feature type="transmembrane region" description="Helical" evidence="1">
    <location>
        <begin position="407"/>
        <end position="427"/>
    </location>
</feature>
<feature type="transmembrane region" description="Helical" evidence="1">
    <location>
        <begin position="452"/>
        <end position="472"/>
    </location>
</feature>
<name>NUON_ERYLH</name>
<dbReference type="EC" id="7.1.1.-" evidence="1"/>
<dbReference type="EMBL" id="CP000157">
    <property type="protein sequence ID" value="ABC63412.1"/>
    <property type="molecule type" value="Genomic_DNA"/>
</dbReference>
<dbReference type="RefSeq" id="WP_011414248.1">
    <property type="nucleotide sequence ID" value="NC_007722.1"/>
</dbReference>
<dbReference type="SMR" id="Q2NA79"/>
<dbReference type="STRING" id="314225.ELI_06600"/>
<dbReference type="KEGG" id="eli:ELI_06600"/>
<dbReference type="eggNOG" id="COG1007">
    <property type="taxonomic scope" value="Bacteria"/>
</dbReference>
<dbReference type="HOGENOM" id="CLU_007100_1_3_5"/>
<dbReference type="OrthoDB" id="9811718at2"/>
<dbReference type="Proteomes" id="UP000008808">
    <property type="component" value="Chromosome"/>
</dbReference>
<dbReference type="GO" id="GO:0005886">
    <property type="term" value="C:plasma membrane"/>
    <property type="evidence" value="ECO:0007669"/>
    <property type="project" value="UniProtKB-SubCell"/>
</dbReference>
<dbReference type="GO" id="GO:0008137">
    <property type="term" value="F:NADH dehydrogenase (ubiquinone) activity"/>
    <property type="evidence" value="ECO:0007669"/>
    <property type="project" value="InterPro"/>
</dbReference>
<dbReference type="GO" id="GO:0050136">
    <property type="term" value="F:NADH:ubiquinone reductase (non-electrogenic) activity"/>
    <property type="evidence" value="ECO:0007669"/>
    <property type="project" value="UniProtKB-UniRule"/>
</dbReference>
<dbReference type="GO" id="GO:0048038">
    <property type="term" value="F:quinone binding"/>
    <property type="evidence" value="ECO:0007669"/>
    <property type="project" value="UniProtKB-KW"/>
</dbReference>
<dbReference type="GO" id="GO:0042773">
    <property type="term" value="P:ATP synthesis coupled electron transport"/>
    <property type="evidence" value="ECO:0007669"/>
    <property type="project" value="InterPro"/>
</dbReference>
<dbReference type="HAMAP" id="MF_00445">
    <property type="entry name" value="NDH1_NuoN_1"/>
    <property type="match status" value="1"/>
</dbReference>
<dbReference type="InterPro" id="IPR010096">
    <property type="entry name" value="NADH-Q_OxRdtase_suN/2"/>
</dbReference>
<dbReference type="InterPro" id="IPR001750">
    <property type="entry name" value="ND/Mrp_TM"/>
</dbReference>
<dbReference type="NCBIfam" id="TIGR01770">
    <property type="entry name" value="NDH_I_N"/>
    <property type="match status" value="1"/>
</dbReference>
<dbReference type="NCBIfam" id="NF004440">
    <property type="entry name" value="PRK05777.1-3"/>
    <property type="match status" value="1"/>
</dbReference>
<dbReference type="PANTHER" id="PTHR22773">
    <property type="entry name" value="NADH DEHYDROGENASE"/>
    <property type="match status" value="1"/>
</dbReference>
<dbReference type="Pfam" id="PF00361">
    <property type="entry name" value="Proton_antipo_M"/>
    <property type="match status" value="1"/>
</dbReference>
<evidence type="ECO:0000255" key="1">
    <source>
        <dbReference type="HAMAP-Rule" id="MF_00445"/>
    </source>
</evidence>
<keyword id="KW-0997">Cell inner membrane</keyword>
<keyword id="KW-1003">Cell membrane</keyword>
<keyword id="KW-0472">Membrane</keyword>
<keyword id="KW-0520">NAD</keyword>
<keyword id="KW-0874">Quinone</keyword>
<keyword id="KW-1185">Reference proteome</keyword>
<keyword id="KW-1278">Translocase</keyword>
<keyword id="KW-0812">Transmembrane</keyword>
<keyword id="KW-1133">Transmembrane helix</keyword>
<keyword id="KW-0813">Transport</keyword>
<keyword id="KW-0830">Ubiquinone</keyword>
<sequence>MELNASLTLILPEIVMAISAMALILITAYVGDKTARLVSILAAATLGAAAVMVAPALTSGASGPDTVAFGGQFLADSFASFAKILIYLSAIGCLMIAPAFFDRLKAMRPEYPVLVLLATLGMSIMVSAGDLITLYIGLELNSLAAYVLASFLRNDTRSAEAGLKYFVLGALASGILLYGMSLVYGFTGTTDFEGVRGALTGDMSTGALFGVIFVLAGLAFKIAAVPFHMWTPDVYEGAPTPVTTFFATAPKVAAVALTARVALSPFGEQTEAWQQIVIFAALASIVLGALGAIGQTNLKRLLAYSSINNVGFILIGLAASTVAGLSAMLTYLAIYVVMALGSFVALLMLKDEDGTPLETFDDIAGLSTTRPALAWCLLFLMFSLAGIPPLLGFWGKFVVFQAAVQADMVLLAALGIAASVIGAFYYIKFVKVMFFDDAVDRVKGTSDTAHWVLLILAAVVVSPLGYLLTGWLGGLTDSAASALFIAS</sequence>
<accession>Q2NA79</accession>
<gene>
    <name evidence="1" type="primary">nuoN</name>
    <name type="ordered locus">ELI_06600</name>
</gene>
<reference key="1">
    <citation type="journal article" date="2009" name="J. Bacteriol.">
        <title>Complete genome sequence of Erythrobacter litoralis HTCC2594.</title>
        <authorList>
            <person name="Oh H.M."/>
            <person name="Giovannoni S.J."/>
            <person name="Ferriera S."/>
            <person name="Johnson J."/>
            <person name="Cho J.C."/>
        </authorList>
    </citation>
    <scope>NUCLEOTIDE SEQUENCE [LARGE SCALE GENOMIC DNA]</scope>
    <source>
        <strain>HTCC2594</strain>
    </source>
</reference>